<organism>
    <name type="scientific">Paraburkholderia xenovorans (strain LB400)</name>
    <dbReference type="NCBI Taxonomy" id="266265"/>
    <lineage>
        <taxon>Bacteria</taxon>
        <taxon>Pseudomonadati</taxon>
        <taxon>Pseudomonadota</taxon>
        <taxon>Betaproteobacteria</taxon>
        <taxon>Burkholderiales</taxon>
        <taxon>Burkholderiaceae</taxon>
        <taxon>Paraburkholderia</taxon>
    </lineage>
</organism>
<evidence type="ECO:0000255" key="1">
    <source>
        <dbReference type="HAMAP-Rule" id="MF_01537"/>
    </source>
</evidence>
<name>PPNP_PARXL</name>
<keyword id="KW-0328">Glycosyltransferase</keyword>
<keyword id="KW-1185">Reference proteome</keyword>
<keyword id="KW-0808">Transferase</keyword>
<sequence length="106" mass="11576">MTAATQFDQVSIIKRANVYFDGKCVSHTVVFPDGSRKTLGVILPGALNFGTDAAELMEVQAGQCRIRLEGSEDWKTYGAGESFSVPGNSRFDIDVVETLDYVCSYL</sequence>
<reference key="1">
    <citation type="journal article" date="2006" name="Proc. Natl. Acad. Sci. U.S.A.">
        <title>Burkholderia xenovorans LB400 harbors a multi-replicon, 9.73-Mbp genome shaped for versatility.</title>
        <authorList>
            <person name="Chain P.S.G."/>
            <person name="Denef V.J."/>
            <person name="Konstantinidis K.T."/>
            <person name="Vergez L.M."/>
            <person name="Agullo L."/>
            <person name="Reyes V.L."/>
            <person name="Hauser L."/>
            <person name="Cordova M."/>
            <person name="Gomez L."/>
            <person name="Gonzalez M."/>
            <person name="Land M."/>
            <person name="Lao V."/>
            <person name="Larimer F."/>
            <person name="LiPuma J.J."/>
            <person name="Mahenthiralingam E."/>
            <person name="Malfatti S.A."/>
            <person name="Marx C.J."/>
            <person name="Parnell J.J."/>
            <person name="Ramette A."/>
            <person name="Richardson P."/>
            <person name="Seeger M."/>
            <person name="Smith D."/>
            <person name="Spilker T."/>
            <person name="Sul W.J."/>
            <person name="Tsoi T.V."/>
            <person name="Ulrich L.E."/>
            <person name="Zhulin I.B."/>
            <person name="Tiedje J.M."/>
        </authorList>
    </citation>
    <scope>NUCLEOTIDE SEQUENCE [LARGE SCALE GENOMIC DNA]</scope>
    <source>
        <strain>LB400</strain>
    </source>
</reference>
<protein>
    <recommendedName>
        <fullName evidence="1">Pyrimidine/purine nucleoside phosphorylase</fullName>
        <ecNumber evidence="1">2.4.2.1</ecNumber>
        <ecNumber evidence="1">2.4.2.2</ecNumber>
    </recommendedName>
    <alternativeName>
        <fullName evidence="1">Adenosine phosphorylase</fullName>
    </alternativeName>
    <alternativeName>
        <fullName evidence="1">Cytidine phosphorylase</fullName>
    </alternativeName>
    <alternativeName>
        <fullName evidence="1">Guanosine phosphorylase</fullName>
    </alternativeName>
    <alternativeName>
        <fullName evidence="1">Inosine phosphorylase</fullName>
    </alternativeName>
    <alternativeName>
        <fullName evidence="1">Thymidine phosphorylase</fullName>
    </alternativeName>
    <alternativeName>
        <fullName evidence="1">Uridine phosphorylase</fullName>
    </alternativeName>
    <alternativeName>
        <fullName evidence="1">Xanthosine phosphorylase</fullName>
    </alternativeName>
</protein>
<proteinExistence type="inferred from homology"/>
<feature type="chain" id="PRO_0000292786" description="Pyrimidine/purine nucleoside phosphorylase">
    <location>
        <begin position="1"/>
        <end position="106"/>
    </location>
</feature>
<gene>
    <name evidence="1" type="primary">ppnP</name>
    <name type="ordered locus">Bxeno_C1292</name>
    <name type="ORF">Bxe_C1372</name>
</gene>
<accession>Q13FB9</accession>
<comment type="function">
    <text evidence="1">Catalyzes the phosphorolysis of diverse nucleosides, yielding D-ribose 1-phosphate and the respective free bases. Can use uridine, adenosine, guanosine, cytidine, thymidine, inosine and xanthosine as substrates. Also catalyzes the reverse reactions.</text>
</comment>
<comment type="catalytic activity">
    <reaction evidence="1">
        <text>a purine D-ribonucleoside + phosphate = a purine nucleobase + alpha-D-ribose 1-phosphate</text>
        <dbReference type="Rhea" id="RHEA:19805"/>
        <dbReference type="ChEBI" id="CHEBI:26386"/>
        <dbReference type="ChEBI" id="CHEBI:43474"/>
        <dbReference type="ChEBI" id="CHEBI:57720"/>
        <dbReference type="ChEBI" id="CHEBI:142355"/>
        <dbReference type="EC" id="2.4.2.1"/>
    </reaction>
</comment>
<comment type="catalytic activity">
    <reaction evidence="1">
        <text>adenosine + phosphate = alpha-D-ribose 1-phosphate + adenine</text>
        <dbReference type="Rhea" id="RHEA:27642"/>
        <dbReference type="ChEBI" id="CHEBI:16335"/>
        <dbReference type="ChEBI" id="CHEBI:16708"/>
        <dbReference type="ChEBI" id="CHEBI:43474"/>
        <dbReference type="ChEBI" id="CHEBI:57720"/>
        <dbReference type="EC" id="2.4.2.1"/>
    </reaction>
</comment>
<comment type="catalytic activity">
    <reaction evidence="1">
        <text>cytidine + phosphate = cytosine + alpha-D-ribose 1-phosphate</text>
        <dbReference type="Rhea" id="RHEA:52540"/>
        <dbReference type="ChEBI" id="CHEBI:16040"/>
        <dbReference type="ChEBI" id="CHEBI:17562"/>
        <dbReference type="ChEBI" id="CHEBI:43474"/>
        <dbReference type="ChEBI" id="CHEBI:57720"/>
        <dbReference type="EC" id="2.4.2.2"/>
    </reaction>
</comment>
<comment type="catalytic activity">
    <reaction evidence="1">
        <text>guanosine + phosphate = alpha-D-ribose 1-phosphate + guanine</text>
        <dbReference type="Rhea" id="RHEA:13233"/>
        <dbReference type="ChEBI" id="CHEBI:16235"/>
        <dbReference type="ChEBI" id="CHEBI:16750"/>
        <dbReference type="ChEBI" id="CHEBI:43474"/>
        <dbReference type="ChEBI" id="CHEBI:57720"/>
        <dbReference type="EC" id="2.4.2.1"/>
    </reaction>
</comment>
<comment type="catalytic activity">
    <reaction evidence="1">
        <text>inosine + phosphate = alpha-D-ribose 1-phosphate + hypoxanthine</text>
        <dbReference type="Rhea" id="RHEA:27646"/>
        <dbReference type="ChEBI" id="CHEBI:17368"/>
        <dbReference type="ChEBI" id="CHEBI:17596"/>
        <dbReference type="ChEBI" id="CHEBI:43474"/>
        <dbReference type="ChEBI" id="CHEBI:57720"/>
        <dbReference type="EC" id="2.4.2.1"/>
    </reaction>
</comment>
<comment type="catalytic activity">
    <reaction evidence="1">
        <text>thymidine + phosphate = 2-deoxy-alpha-D-ribose 1-phosphate + thymine</text>
        <dbReference type="Rhea" id="RHEA:16037"/>
        <dbReference type="ChEBI" id="CHEBI:17748"/>
        <dbReference type="ChEBI" id="CHEBI:17821"/>
        <dbReference type="ChEBI" id="CHEBI:43474"/>
        <dbReference type="ChEBI" id="CHEBI:57259"/>
        <dbReference type="EC" id="2.4.2.2"/>
    </reaction>
</comment>
<comment type="catalytic activity">
    <reaction evidence="1">
        <text>uridine + phosphate = alpha-D-ribose 1-phosphate + uracil</text>
        <dbReference type="Rhea" id="RHEA:24388"/>
        <dbReference type="ChEBI" id="CHEBI:16704"/>
        <dbReference type="ChEBI" id="CHEBI:17568"/>
        <dbReference type="ChEBI" id="CHEBI:43474"/>
        <dbReference type="ChEBI" id="CHEBI:57720"/>
        <dbReference type="EC" id="2.4.2.2"/>
    </reaction>
</comment>
<comment type="catalytic activity">
    <reaction evidence="1">
        <text>xanthosine + phosphate = alpha-D-ribose 1-phosphate + xanthine</text>
        <dbReference type="Rhea" id="RHEA:27638"/>
        <dbReference type="ChEBI" id="CHEBI:17712"/>
        <dbReference type="ChEBI" id="CHEBI:18107"/>
        <dbReference type="ChEBI" id="CHEBI:43474"/>
        <dbReference type="ChEBI" id="CHEBI:57720"/>
        <dbReference type="EC" id="2.4.2.1"/>
    </reaction>
</comment>
<comment type="similarity">
    <text evidence="1">Belongs to the nucleoside phosphorylase PpnP family.</text>
</comment>
<dbReference type="EC" id="2.4.2.1" evidence="1"/>
<dbReference type="EC" id="2.4.2.2" evidence="1"/>
<dbReference type="EMBL" id="CP000272">
    <property type="protein sequence ID" value="ABE37220.1"/>
    <property type="molecule type" value="Genomic_DNA"/>
</dbReference>
<dbReference type="RefSeq" id="WP_011494446.1">
    <property type="nucleotide sequence ID" value="NC_007953.1"/>
</dbReference>
<dbReference type="SMR" id="Q13FB9"/>
<dbReference type="STRING" id="266265.Bxe_C1372"/>
<dbReference type="KEGG" id="bxb:DR64_8440"/>
<dbReference type="KEGG" id="bxe:Bxe_C1372"/>
<dbReference type="PATRIC" id="fig|266265.5.peg.9124"/>
<dbReference type="eggNOG" id="COG3123">
    <property type="taxonomic scope" value="Bacteria"/>
</dbReference>
<dbReference type="OrthoDB" id="9793848at2"/>
<dbReference type="Proteomes" id="UP000001817">
    <property type="component" value="Chromosome 3"/>
</dbReference>
<dbReference type="GO" id="GO:0005829">
    <property type="term" value="C:cytosol"/>
    <property type="evidence" value="ECO:0007669"/>
    <property type="project" value="TreeGrafter"/>
</dbReference>
<dbReference type="GO" id="GO:0047975">
    <property type="term" value="F:guanosine phosphorylase activity"/>
    <property type="evidence" value="ECO:0007669"/>
    <property type="project" value="UniProtKB-EC"/>
</dbReference>
<dbReference type="GO" id="GO:0004731">
    <property type="term" value="F:purine-nucleoside phosphorylase activity"/>
    <property type="evidence" value="ECO:0007669"/>
    <property type="project" value="UniProtKB-UniRule"/>
</dbReference>
<dbReference type="GO" id="GO:0009032">
    <property type="term" value="F:thymidine phosphorylase activity"/>
    <property type="evidence" value="ECO:0007669"/>
    <property type="project" value="UniProtKB-EC"/>
</dbReference>
<dbReference type="GO" id="GO:0004850">
    <property type="term" value="F:uridine phosphorylase activity"/>
    <property type="evidence" value="ECO:0007669"/>
    <property type="project" value="UniProtKB-EC"/>
</dbReference>
<dbReference type="CDD" id="cd20296">
    <property type="entry name" value="cupin_PpnP-like"/>
    <property type="match status" value="1"/>
</dbReference>
<dbReference type="Gene3D" id="2.60.120.10">
    <property type="entry name" value="Jelly Rolls"/>
    <property type="match status" value="1"/>
</dbReference>
<dbReference type="HAMAP" id="MF_01537">
    <property type="entry name" value="Nucleos_phosphorylase_PpnP"/>
    <property type="match status" value="1"/>
</dbReference>
<dbReference type="InterPro" id="IPR009664">
    <property type="entry name" value="Ppnp"/>
</dbReference>
<dbReference type="InterPro" id="IPR014710">
    <property type="entry name" value="RmlC-like_jellyroll"/>
</dbReference>
<dbReference type="InterPro" id="IPR011051">
    <property type="entry name" value="RmlC_Cupin_sf"/>
</dbReference>
<dbReference type="PANTHER" id="PTHR36540">
    <property type="entry name" value="PYRIMIDINE/PURINE NUCLEOSIDE PHOSPHORYLASE"/>
    <property type="match status" value="1"/>
</dbReference>
<dbReference type="PANTHER" id="PTHR36540:SF1">
    <property type="entry name" value="PYRIMIDINE_PURINE NUCLEOSIDE PHOSPHORYLASE"/>
    <property type="match status" value="1"/>
</dbReference>
<dbReference type="Pfam" id="PF06865">
    <property type="entry name" value="Ppnp"/>
    <property type="match status" value="1"/>
</dbReference>
<dbReference type="SUPFAM" id="SSF51182">
    <property type="entry name" value="RmlC-like cupins"/>
    <property type="match status" value="1"/>
</dbReference>